<reference key="1">
    <citation type="journal article" date="1993" name="Plant J.">
        <title>Receptor-like protein kinase genes of Arabidopsis thaliana.</title>
        <authorList>
            <person name="Walker J.C."/>
        </authorList>
    </citation>
    <scope>NUCLEOTIDE SEQUENCE [MRNA]</scope>
    <source>
        <strain>cv. Columbia</strain>
    </source>
</reference>
<reference key="2">
    <citation type="journal article" date="1999" name="Nature">
        <title>Sequence and analysis of chromosome 4 of the plant Arabidopsis thaliana.</title>
        <authorList>
            <person name="Mayer K.F.X."/>
            <person name="Schueller C."/>
            <person name="Wambutt R."/>
            <person name="Murphy G."/>
            <person name="Volckaert G."/>
            <person name="Pohl T."/>
            <person name="Duesterhoeft A."/>
            <person name="Stiekema W."/>
            <person name="Entian K.-D."/>
            <person name="Terryn N."/>
            <person name="Harris B."/>
            <person name="Ansorge W."/>
            <person name="Brandt P."/>
            <person name="Grivell L.A."/>
            <person name="Rieger M."/>
            <person name="Weichselgartner M."/>
            <person name="de Simone V."/>
            <person name="Obermaier B."/>
            <person name="Mache R."/>
            <person name="Mueller M."/>
            <person name="Kreis M."/>
            <person name="Delseny M."/>
            <person name="Puigdomenech P."/>
            <person name="Watson M."/>
            <person name="Schmidtheini T."/>
            <person name="Reichert B."/>
            <person name="Portetelle D."/>
            <person name="Perez-Alonso M."/>
            <person name="Boutry M."/>
            <person name="Bancroft I."/>
            <person name="Vos P."/>
            <person name="Hoheisel J."/>
            <person name="Zimmermann W."/>
            <person name="Wedler H."/>
            <person name="Ridley P."/>
            <person name="Langham S.-A."/>
            <person name="McCullagh B."/>
            <person name="Bilham L."/>
            <person name="Robben J."/>
            <person name="van der Schueren J."/>
            <person name="Grymonprez B."/>
            <person name="Chuang Y.-J."/>
            <person name="Vandenbussche F."/>
            <person name="Braeken M."/>
            <person name="Weltjens I."/>
            <person name="Voet M."/>
            <person name="Bastiaens I."/>
            <person name="Aert R."/>
            <person name="Defoor E."/>
            <person name="Weitzenegger T."/>
            <person name="Bothe G."/>
            <person name="Ramsperger U."/>
            <person name="Hilbert H."/>
            <person name="Braun M."/>
            <person name="Holzer E."/>
            <person name="Brandt A."/>
            <person name="Peters S."/>
            <person name="van Staveren M."/>
            <person name="Dirkse W."/>
            <person name="Mooijman P."/>
            <person name="Klein Lankhorst R."/>
            <person name="Rose M."/>
            <person name="Hauf J."/>
            <person name="Koetter P."/>
            <person name="Berneiser S."/>
            <person name="Hempel S."/>
            <person name="Feldpausch M."/>
            <person name="Lamberth S."/>
            <person name="Van den Daele H."/>
            <person name="De Keyser A."/>
            <person name="Buysshaert C."/>
            <person name="Gielen J."/>
            <person name="Villarroel R."/>
            <person name="De Clercq R."/>
            <person name="van Montagu M."/>
            <person name="Rogers J."/>
            <person name="Cronin A."/>
            <person name="Quail M.A."/>
            <person name="Bray-Allen S."/>
            <person name="Clark L."/>
            <person name="Doggett J."/>
            <person name="Hall S."/>
            <person name="Kay M."/>
            <person name="Lennard N."/>
            <person name="McLay K."/>
            <person name="Mayes R."/>
            <person name="Pettett A."/>
            <person name="Rajandream M.A."/>
            <person name="Lyne M."/>
            <person name="Benes V."/>
            <person name="Rechmann S."/>
            <person name="Borkova D."/>
            <person name="Bloecker H."/>
            <person name="Scharfe M."/>
            <person name="Grimm M."/>
            <person name="Loehnert T.-H."/>
            <person name="Dose S."/>
            <person name="de Haan M."/>
            <person name="Maarse A.C."/>
            <person name="Schaefer M."/>
            <person name="Mueller-Auer S."/>
            <person name="Gabel C."/>
            <person name="Fuchs M."/>
            <person name="Fartmann B."/>
            <person name="Granderath K."/>
            <person name="Dauner D."/>
            <person name="Herzl A."/>
            <person name="Neumann S."/>
            <person name="Argiriou A."/>
            <person name="Vitale D."/>
            <person name="Liguori R."/>
            <person name="Piravandi E."/>
            <person name="Massenet O."/>
            <person name="Quigley F."/>
            <person name="Clabauld G."/>
            <person name="Muendlein A."/>
            <person name="Felber R."/>
            <person name="Schnabl S."/>
            <person name="Hiller R."/>
            <person name="Schmidt W."/>
            <person name="Lecharny A."/>
            <person name="Aubourg S."/>
            <person name="Chefdor F."/>
            <person name="Cooke R."/>
            <person name="Berger C."/>
            <person name="Monfort A."/>
            <person name="Casacuberta E."/>
            <person name="Gibbons T."/>
            <person name="Weber N."/>
            <person name="Vandenbol M."/>
            <person name="Bargues M."/>
            <person name="Terol J."/>
            <person name="Torres A."/>
            <person name="Perez-Perez A."/>
            <person name="Purnelle B."/>
            <person name="Bent E."/>
            <person name="Johnson S."/>
            <person name="Tacon D."/>
            <person name="Jesse T."/>
            <person name="Heijnen L."/>
            <person name="Schwarz S."/>
            <person name="Scholler P."/>
            <person name="Heber S."/>
            <person name="Francs P."/>
            <person name="Bielke C."/>
            <person name="Frishman D."/>
            <person name="Haase D."/>
            <person name="Lemcke K."/>
            <person name="Mewes H.-W."/>
            <person name="Stocker S."/>
            <person name="Zaccaria P."/>
            <person name="Bevan M."/>
            <person name="Wilson R.K."/>
            <person name="de la Bastide M."/>
            <person name="Habermann K."/>
            <person name="Parnell L."/>
            <person name="Dedhia N."/>
            <person name="Gnoj L."/>
            <person name="Schutz K."/>
            <person name="Huang E."/>
            <person name="Spiegel L."/>
            <person name="Sekhon M."/>
            <person name="Murray J."/>
            <person name="Sheet P."/>
            <person name="Cordes M."/>
            <person name="Abu-Threideh J."/>
            <person name="Stoneking T."/>
            <person name="Kalicki J."/>
            <person name="Graves T."/>
            <person name="Harmon G."/>
            <person name="Edwards J."/>
            <person name="Latreille P."/>
            <person name="Courtney L."/>
            <person name="Cloud J."/>
            <person name="Abbott A."/>
            <person name="Scott K."/>
            <person name="Johnson D."/>
            <person name="Minx P."/>
            <person name="Bentley D."/>
            <person name="Fulton B."/>
            <person name="Miller N."/>
            <person name="Greco T."/>
            <person name="Kemp K."/>
            <person name="Kramer J."/>
            <person name="Fulton L."/>
            <person name="Mardis E."/>
            <person name="Dante M."/>
            <person name="Pepin K."/>
            <person name="Hillier L.W."/>
            <person name="Nelson J."/>
            <person name="Spieth J."/>
            <person name="Ryan E."/>
            <person name="Andrews S."/>
            <person name="Geisel C."/>
            <person name="Layman D."/>
            <person name="Du H."/>
            <person name="Ali J."/>
            <person name="Berghoff A."/>
            <person name="Jones K."/>
            <person name="Drone K."/>
            <person name="Cotton M."/>
            <person name="Joshu C."/>
            <person name="Antonoiu B."/>
            <person name="Zidanic M."/>
            <person name="Strong C."/>
            <person name="Sun H."/>
            <person name="Lamar B."/>
            <person name="Yordan C."/>
            <person name="Ma P."/>
            <person name="Zhong J."/>
            <person name="Preston R."/>
            <person name="Vil D."/>
            <person name="Shekher M."/>
            <person name="Matero A."/>
            <person name="Shah R."/>
            <person name="Swaby I.K."/>
            <person name="O'Shaughnessy A."/>
            <person name="Rodriguez M."/>
            <person name="Hoffman J."/>
            <person name="Till S."/>
            <person name="Granat S."/>
            <person name="Shohdy N."/>
            <person name="Hasegawa A."/>
            <person name="Hameed A."/>
            <person name="Lodhi M."/>
            <person name="Johnson A."/>
            <person name="Chen E."/>
            <person name="Marra M.A."/>
            <person name="Martienssen R."/>
            <person name="McCombie W.R."/>
        </authorList>
    </citation>
    <scope>NUCLEOTIDE SEQUENCE [LARGE SCALE GENOMIC DNA]</scope>
    <source>
        <strain>cv. Columbia</strain>
    </source>
</reference>
<reference key="3">
    <citation type="journal article" date="2017" name="Plant J.">
        <title>Araport11: a complete reannotation of the Arabidopsis thaliana reference genome.</title>
        <authorList>
            <person name="Cheng C.Y."/>
            <person name="Krishnakumar V."/>
            <person name="Chan A.P."/>
            <person name="Thibaud-Nissen F."/>
            <person name="Schobel S."/>
            <person name="Town C.D."/>
        </authorList>
    </citation>
    <scope>GENOME REANNOTATION</scope>
    <source>
        <strain>cv. Columbia</strain>
    </source>
</reference>
<reference key="4">
    <citation type="journal article" date="1999" name="Plant Sci.">
        <title>Biochemical characterization and expression of RLK4, a receptor-like kinase from Arabidopsis thaliana.</title>
        <authorList>
            <person name="Coelloa P."/>
            <person name="Sassena A."/>
            <person name="Haywoodb V."/>
            <person name="Davisb K.R."/>
            <person name="Walker J.C."/>
        </authorList>
    </citation>
    <scope>FUNCTION</scope>
    <scope>CATALYTIC ACTIVITY</scope>
    <scope>TISSUE SPECIFICITY</scope>
    <scope>AUTOPHOSPHORYLATION</scope>
    <scope>MUTAGENESIS OF LYS-490</scope>
</reference>
<reference key="5">
    <citation type="journal article" date="2003" name="Mol. Cell. Proteomics">
        <title>Large-scale analysis of in vivo phosphorylated membrane proteins by immobilized metal ion affinity chromatography and mass spectrometry.</title>
        <authorList>
            <person name="Nuehse T.S."/>
            <person name="Stensballe A."/>
            <person name="Jensen O.N."/>
            <person name="Peck S.C."/>
        </authorList>
    </citation>
    <scope>SUBCELLULAR LOCATION</scope>
    <scope>IDENTIFICATION BY MASS SPECTROMETRY [LARGE SCALE ANALYSIS]</scope>
    <source>
        <strain>cv. La-0</strain>
    </source>
</reference>
<reference key="6">
    <citation type="journal article" date="2004" name="Plant Cell">
        <title>Phosphoproteomics of the Arabidopsis plasma membrane and a new phosphorylation site database.</title>
        <authorList>
            <person name="Nuehse T.S."/>
            <person name="Stensballe A."/>
            <person name="Jensen O.N."/>
            <person name="Peck S.C."/>
        </authorList>
    </citation>
    <scope>SUBCELLULAR LOCATION</scope>
    <scope>IDENTIFICATION BY MASS SPECTROMETRY [LARGE SCALE ANALYSIS]</scope>
</reference>
<reference key="7">
    <citation type="journal article" date="2008" name="Plant Physiol.">
        <title>Interactions between the S-domain receptor kinases and AtPUB-ARM E3 ubiquitin ligases suggest a conserved signaling pathway in Arabidopsis.</title>
        <authorList>
            <person name="Samuel M.A."/>
            <person name="Mudgil Y."/>
            <person name="Salt J.N."/>
            <person name="Delmas F."/>
            <person name="Ramachandran S."/>
            <person name="Chilelli A."/>
            <person name="Goring D.R."/>
        </authorList>
    </citation>
    <scope>GENE FAMILY</scope>
    <scope>NOMENCLATURE</scope>
</reference>
<sequence>MPCTTYLPLLLLLFLLPPPSVQSKVIIKGNQTILSFKAIFRLGFFSTTNGSSNWYLGISYASMPTPTHVWVANRIRPVSDPDSSTLELTSTGYLIVSNLRDGVVWQTDNKQPGTDFRFSETGNLILINDDGSPVWQSFDNPTDTWLPGMNVTGLTAMTSWRSLFDPSPGFYSLRLSPSFNEFQLVYKGTTPYWSTGNWTGEAFVGVPEMTIPYIYRFHFVNPYTPTASFWYIVPPLDSVSEPRLTRFMVGANGQLKQYTWDPQTQSWNMFWLQPEDPCRVYNLCGQLGFCSSELLKPCACIRGFRPRNDAAWRSDDYSDGCRRENGDSGEKSDTFEAVGDLRYDGDVKMSRLQVSKSSCAKTCLGNSSCVGFYHKEKSNLCKILLESPNNLKNSKGNISKSIIILCSVVGSISVLGFTLLVPLILLKRSRKRKKTRKQDEDGFAVLNLKVFSFKELQSATNGFSDKVGHGGFGAVFKGTLPGSSTFVAVKRLERPGSGESEFRAEVCTIGNIQHVNLVRLRGFCSENLHRLLVYDYMPQGSLSSYLSRTSPKLLSWETRFRIALGTAKGIAYLHEGCRDCIIHCDIKPENILLDSDYNAKVSDFGLAKLLGRDFSRVLATMRGTWGYVAPEWISGLPITTKADVYSFGMTLLELIGGRRNVIVNSDTLGEKETEPEKWFFPPWAAREIIQGNVDSVVDSRLNGEYNTEEVTRMATVAIWCIQDNEEIRPAMGTVVKMLEGVVEVTVPPPPKLIQALVSGDSYRGVSGTSCSEGHGCSDLNTGLSSPGSRSSFGRPSP</sequence>
<name>SD22_ARATH</name>
<comment type="function">
    <text evidence="10">Serine/threonine-protein kinase.</text>
</comment>
<comment type="catalytic activity">
    <reaction evidence="10">
        <text>L-seryl-[protein] + ATP = O-phospho-L-seryl-[protein] + ADP + H(+)</text>
        <dbReference type="Rhea" id="RHEA:17989"/>
        <dbReference type="Rhea" id="RHEA-COMP:9863"/>
        <dbReference type="Rhea" id="RHEA-COMP:11604"/>
        <dbReference type="ChEBI" id="CHEBI:15378"/>
        <dbReference type="ChEBI" id="CHEBI:29999"/>
        <dbReference type="ChEBI" id="CHEBI:30616"/>
        <dbReference type="ChEBI" id="CHEBI:83421"/>
        <dbReference type="ChEBI" id="CHEBI:456216"/>
        <dbReference type="EC" id="2.7.11.1"/>
    </reaction>
</comment>
<comment type="catalytic activity">
    <reaction evidence="10">
        <text>L-threonyl-[protein] + ATP = O-phospho-L-threonyl-[protein] + ADP + H(+)</text>
        <dbReference type="Rhea" id="RHEA:46608"/>
        <dbReference type="Rhea" id="RHEA-COMP:11060"/>
        <dbReference type="Rhea" id="RHEA-COMP:11605"/>
        <dbReference type="ChEBI" id="CHEBI:15378"/>
        <dbReference type="ChEBI" id="CHEBI:30013"/>
        <dbReference type="ChEBI" id="CHEBI:30616"/>
        <dbReference type="ChEBI" id="CHEBI:61977"/>
        <dbReference type="ChEBI" id="CHEBI:456216"/>
        <dbReference type="EC" id="2.7.11.1"/>
    </reaction>
</comment>
<comment type="subcellular location">
    <subcellularLocation>
        <location evidence="8 9">Cell membrane</location>
        <topology evidence="8 9">Single-pass type I membrane protein</topology>
    </subcellularLocation>
</comment>
<comment type="tissue specificity">
    <text evidence="10">Expressed in the shoot apex and roots, specifically in lateral roots and at the root-hypocotyl transition zone.</text>
</comment>
<comment type="PTM">
    <text>Autophosphorylated.</text>
</comment>
<comment type="similarity">
    <text evidence="4">Belongs to the protein kinase superfamily. Ser/Thr protein kinase family.</text>
</comment>
<comment type="sequence caution" evidence="11">
    <conflict type="erroneous gene model prediction">
        <sequence resource="EMBL-CDS" id="AAB62838"/>
    </conflict>
</comment>
<comment type="sequence caution" evidence="11">
    <conflict type="erroneous gene model prediction">
        <sequence resource="EMBL-CDS" id="AAF02796"/>
    </conflict>
</comment>
<comment type="sequence caution" evidence="11">
    <conflict type="erroneous gene model prediction">
        <sequence resource="EMBL-CDS" id="AEE81862"/>
    </conflict>
</comment>
<comment type="sequence caution" evidence="11">
    <conflict type="erroneous gene model prediction">
        <sequence resource="EMBL-CDS" id="CAB80792"/>
    </conflict>
</comment>
<proteinExistence type="evidence at protein level"/>
<organism>
    <name type="scientific">Arabidopsis thaliana</name>
    <name type="common">Mouse-ear cress</name>
    <dbReference type="NCBI Taxonomy" id="3702"/>
    <lineage>
        <taxon>Eukaryota</taxon>
        <taxon>Viridiplantae</taxon>
        <taxon>Streptophyta</taxon>
        <taxon>Embryophyta</taxon>
        <taxon>Tracheophyta</taxon>
        <taxon>Spermatophyta</taxon>
        <taxon>Magnoliopsida</taxon>
        <taxon>eudicotyledons</taxon>
        <taxon>Gunneridae</taxon>
        <taxon>Pentapetalae</taxon>
        <taxon>rosids</taxon>
        <taxon>malvids</taxon>
        <taxon>Brassicales</taxon>
        <taxon>Brassicaceae</taxon>
        <taxon>Camelineae</taxon>
        <taxon>Arabidopsis</taxon>
    </lineage>
</organism>
<dbReference type="EC" id="2.7.11.1"/>
<dbReference type="EMBL" id="M84659">
    <property type="protein sequence ID" value="AAA32858.1"/>
    <property type="molecule type" value="mRNA"/>
</dbReference>
<dbReference type="EMBL" id="AF013293">
    <property type="protein sequence ID" value="AAB62838.1"/>
    <property type="status" value="ALT_SEQ"/>
    <property type="molecule type" value="Genomic_DNA"/>
</dbReference>
<dbReference type="EMBL" id="AF195115">
    <property type="protein sequence ID" value="AAF02796.1"/>
    <property type="status" value="ALT_SEQ"/>
    <property type="molecule type" value="Genomic_DNA"/>
</dbReference>
<dbReference type="EMBL" id="AL161471">
    <property type="protein sequence ID" value="CAB80792.1"/>
    <property type="status" value="ALT_SEQ"/>
    <property type="molecule type" value="Genomic_DNA"/>
</dbReference>
<dbReference type="EMBL" id="CP002687">
    <property type="protein sequence ID" value="AEE81862.1"/>
    <property type="status" value="ALT_SEQ"/>
    <property type="molecule type" value="Genomic_DNA"/>
</dbReference>
<dbReference type="PIR" id="T01537">
    <property type="entry name" value="T01537"/>
</dbReference>
<dbReference type="RefSeq" id="NP_567172.4">
    <property type="nucleotide sequence ID" value="NM_116257.5"/>
</dbReference>
<dbReference type="SMR" id="Q39203"/>
<dbReference type="BioGRID" id="13370">
    <property type="interactions" value="7"/>
</dbReference>
<dbReference type="FunCoup" id="Q39203">
    <property type="interactions" value="26"/>
</dbReference>
<dbReference type="IntAct" id="Q39203">
    <property type="interactions" value="7"/>
</dbReference>
<dbReference type="STRING" id="3702.Q39203"/>
<dbReference type="GlyCosmos" id="Q39203">
    <property type="glycosylation" value="6 sites, No reported glycans"/>
</dbReference>
<dbReference type="GlyGen" id="Q39203">
    <property type="glycosylation" value="6 sites"/>
</dbReference>
<dbReference type="PaxDb" id="3702-AT4G00340.1"/>
<dbReference type="ProteomicsDB" id="232720"/>
<dbReference type="GeneID" id="828079"/>
<dbReference type="KEGG" id="ath:AT4G00340"/>
<dbReference type="Araport" id="AT4G00340"/>
<dbReference type="TAIR" id="AT4G00340">
    <property type="gene designation" value="RLK4"/>
</dbReference>
<dbReference type="eggNOG" id="ENOG502QRRX">
    <property type="taxonomic scope" value="Eukaryota"/>
</dbReference>
<dbReference type="HOGENOM" id="CLU_000288_116_2_1"/>
<dbReference type="InParanoid" id="Q39203"/>
<dbReference type="PhylomeDB" id="Q39203"/>
<dbReference type="PRO" id="PR:Q39203"/>
<dbReference type="Proteomes" id="UP000006548">
    <property type="component" value="Chromosome 4"/>
</dbReference>
<dbReference type="ExpressionAtlas" id="Q39203">
    <property type="expression patterns" value="baseline and differential"/>
</dbReference>
<dbReference type="GO" id="GO:0005886">
    <property type="term" value="C:plasma membrane"/>
    <property type="evidence" value="ECO:0007669"/>
    <property type="project" value="UniProtKB-SubCell"/>
</dbReference>
<dbReference type="GO" id="GO:0005524">
    <property type="term" value="F:ATP binding"/>
    <property type="evidence" value="ECO:0007669"/>
    <property type="project" value="UniProtKB-KW"/>
</dbReference>
<dbReference type="GO" id="GO:0005516">
    <property type="term" value="F:calmodulin binding"/>
    <property type="evidence" value="ECO:0000250"/>
    <property type="project" value="UniProtKB"/>
</dbReference>
<dbReference type="GO" id="GO:0030246">
    <property type="term" value="F:carbohydrate binding"/>
    <property type="evidence" value="ECO:0007669"/>
    <property type="project" value="UniProtKB-KW"/>
</dbReference>
<dbReference type="GO" id="GO:0106310">
    <property type="term" value="F:protein serine kinase activity"/>
    <property type="evidence" value="ECO:0007669"/>
    <property type="project" value="RHEA"/>
</dbReference>
<dbReference type="GO" id="GO:0004674">
    <property type="term" value="F:protein serine/threonine kinase activity"/>
    <property type="evidence" value="ECO:0000250"/>
    <property type="project" value="UniProtKB"/>
</dbReference>
<dbReference type="GO" id="GO:0031625">
    <property type="term" value="F:ubiquitin protein ligase binding"/>
    <property type="evidence" value="ECO:0007669"/>
    <property type="project" value="UniProtKB-ARBA"/>
</dbReference>
<dbReference type="GO" id="GO:0048544">
    <property type="term" value="P:recognition of pollen"/>
    <property type="evidence" value="ECO:0007669"/>
    <property type="project" value="InterPro"/>
</dbReference>
<dbReference type="CDD" id="cd00028">
    <property type="entry name" value="B_lectin"/>
    <property type="match status" value="1"/>
</dbReference>
<dbReference type="CDD" id="cd14066">
    <property type="entry name" value="STKc_IRAK"/>
    <property type="match status" value="1"/>
</dbReference>
<dbReference type="FunFam" id="3.30.200.20:FF:000370">
    <property type="entry name" value="Receptor-like protein kinase 4"/>
    <property type="match status" value="1"/>
</dbReference>
<dbReference type="FunFam" id="2.90.10.10:FF:000009">
    <property type="entry name" value="Receptor-like serine/threonine-protein kinase SD1-8"/>
    <property type="match status" value="1"/>
</dbReference>
<dbReference type="FunFam" id="1.10.510.10:FF:000248">
    <property type="entry name" value="S-receptor-like kinase 5"/>
    <property type="match status" value="1"/>
</dbReference>
<dbReference type="Gene3D" id="2.90.10.10">
    <property type="entry name" value="Bulb-type lectin domain"/>
    <property type="match status" value="1"/>
</dbReference>
<dbReference type="Gene3D" id="3.30.200.20">
    <property type="entry name" value="Phosphorylase Kinase, domain 1"/>
    <property type="match status" value="1"/>
</dbReference>
<dbReference type="Gene3D" id="1.10.510.10">
    <property type="entry name" value="Transferase(Phosphotransferase) domain 1"/>
    <property type="match status" value="1"/>
</dbReference>
<dbReference type="InterPro" id="IPR001480">
    <property type="entry name" value="Bulb-type_lectin_dom"/>
</dbReference>
<dbReference type="InterPro" id="IPR036426">
    <property type="entry name" value="Bulb-type_lectin_dom_sf"/>
</dbReference>
<dbReference type="InterPro" id="IPR011009">
    <property type="entry name" value="Kinase-like_dom_sf"/>
</dbReference>
<dbReference type="InterPro" id="IPR003609">
    <property type="entry name" value="Pan_app"/>
</dbReference>
<dbReference type="InterPro" id="IPR000719">
    <property type="entry name" value="Prot_kinase_dom"/>
</dbReference>
<dbReference type="InterPro" id="IPR017441">
    <property type="entry name" value="Protein_kinase_ATP_BS"/>
</dbReference>
<dbReference type="InterPro" id="IPR000858">
    <property type="entry name" value="S_locus_glycoprot_dom"/>
</dbReference>
<dbReference type="InterPro" id="IPR008271">
    <property type="entry name" value="Ser/Thr_kinase_AS"/>
</dbReference>
<dbReference type="InterPro" id="IPR024171">
    <property type="entry name" value="SRK-like_kinase"/>
</dbReference>
<dbReference type="PANTHER" id="PTHR47974">
    <property type="entry name" value="OS07G0415500 PROTEIN"/>
    <property type="match status" value="1"/>
</dbReference>
<dbReference type="PANTHER" id="PTHR47974:SF20">
    <property type="entry name" value="RECEPTOR-LIKE SERINE_THREONINE-PROTEIN KINASE"/>
    <property type="match status" value="1"/>
</dbReference>
<dbReference type="Pfam" id="PF01453">
    <property type="entry name" value="B_lectin"/>
    <property type="match status" value="1"/>
</dbReference>
<dbReference type="Pfam" id="PF00069">
    <property type="entry name" value="Pkinase"/>
    <property type="match status" value="1"/>
</dbReference>
<dbReference type="Pfam" id="PF00954">
    <property type="entry name" value="S_locus_glycop"/>
    <property type="match status" value="1"/>
</dbReference>
<dbReference type="PIRSF" id="PIRSF000641">
    <property type="entry name" value="SRK"/>
    <property type="match status" value="1"/>
</dbReference>
<dbReference type="SMART" id="SM00108">
    <property type="entry name" value="B_lectin"/>
    <property type="match status" value="1"/>
</dbReference>
<dbReference type="SMART" id="SM00220">
    <property type="entry name" value="S_TKc"/>
    <property type="match status" value="1"/>
</dbReference>
<dbReference type="SUPFAM" id="SSF51110">
    <property type="entry name" value="alpha-D-mannose-specific plant lectins"/>
    <property type="match status" value="1"/>
</dbReference>
<dbReference type="SUPFAM" id="SSF56112">
    <property type="entry name" value="Protein kinase-like (PK-like)"/>
    <property type="match status" value="1"/>
</dbReference>
<dbReference type="PROSITE" id="PS50927">
    <property type="entry name" value="BULB_LECTIN"/>
    <property type="match status" value="1"/>
</dbReference>
<dbReference type="PROSITE" id="PS50948">
    <property type="entry name" value="PAN"/>
    <property type="match status" value="1"/>
</dbReference>
<dbReference type="PROSITE" id="PS00107">
    <property type="entry name" value="PROTEIN_KINASE_ATP"/>
    <property type="match status" value="1"/>
</dbReference>
<dbReference type="PROSITE" id="PS50011">
    <property type="entry name" value="PROTEIN_KINASE_DOM"/>
    <property type="match status" value="1"/>
</dbReference>
<dbReference type="PROSITE" id="PS00108">
    <property type="entry name" value="PROTEIN_KINASE_ST"/>
    <property type="match status" value="1"/>
</dbReference>
<gene>
    <name type="primary">SD22</name>
    <name type="synonym">RLK4</name>
    <name type="ordered locus">At4g00340</name>
    <name type="ORF">A_IG005I10.19</name>
    <name type="ORF">F5I10.19</name>
</gene>
<protein>
    <recommendedName>
        <fullName>G-type lectin S-receptor-like serine/threonine-protein kinase SD2-2</fullName>
        <ecNumber>2.7.11.1</ecNumber>
    </recommendedName>
    <alternativeName>
        <fullName>Receptor-like kinase 4</fullName>
    </alternativeName>
    <alternativeName>
        <fullName>S-domain-2 (SD2) receptor kinase 2</fullName>
        <shortName>SD2-2</shortName>
    </alternativeName>
</protein>
<accession>Q39203</accession>
<accession>F4JH44</accession>
<accession>O23068</accession>
<feature type="signal peptide" evidence="2">
    <location>
        <begin position="1"/>
        <end position="23"/>
    </location>
</feature>
<feature type="chain" id="PRO_5000143618" description="G-type lectin S-receptor-like serine/threonine-protein kinase SD2-2">
    <location>
        <begin position="24"/>
        <end position="797"/>
    </location>
</feature>
<feature type="topological domain" description="Extracellular" evidence="2">
    <location>
        <begin position="24"/>
        <end position="401"/>
    </location>
</feature>
<feature type="transmembrane region" description="Helical" evidence="2">
    <location>
        <begin position="402"/>
        <end position="422"/>
    </location>
</feature>
<feature type="topological domain" description="Cytoplasmic" evidence="2">
    <location>
        <begin position="423"/>
        <end position="797"/>
    </location>
</feature>
<feature type="domain" description="Bulb-type lectin" evidence="3">
    <location>
        <begin position="24"/>
        <end position="139"/>
    </location>
</feature>
<feature type="domain" description="EGF-like; atypical">
    <location>
        <begin position="274"/>
        <end position="310"/>
    </location>
</feature>
<feature type="domain" description="PAN" evidence="5">
    <location>
        <begin position="321"/>
        <end position="407"/>
    </location>
</feature>
<feature type="domain" description="Protein kinase" evidence="4">
    <location>
        <begin position="461"/>
        <end position="742"/>
    </location>
</feature>
<feature type="region of interest" description="CaM-binding" evidence="1">
    <location>
        <begin position="550"/>
        <end position="566"/>
    </location>
</feature>
<feature type="region of interest" description="Disordered" evidence="7">
    <location>
        <begin position="767"/>
        <end position="797"/>
    </location>
</feature>
<feature type="compositionally biased region" description="Low complexity" evidence="7">
    <location>
        <begin position="784"/>
        <end position="797"/>
    </location>
</feature>
<feature type="active site" description="Proton acceptor" evidence="4 6">
    <location>
        <position position="585"/>
    </location>
</feature>
<feature type="binding site" evidence="4">
    <location>
        <begin position="467"/>
        <end position="475"/>
    </location>
    <ligand>
        <name>ATP</name>
        <dbReference type="ChEBI" id="CHEBI:30616"/>
    </ligand>
</feature>
<feature type="binding site" evidence="4">
    <location>
        <position position="490"/>
    </location>
    <ligand>
        <name>ATP</name>
        <dbReference type="ChEBI" id="CHEBI:30616"/>
    </ligand>
</feature>
<feature type="glycosylation site" description="N-linked (GlcNAc...) asparagine" evidence="2">
    <location>
        <position position="30"/>
    </location>
</feature>
<feature type="glycosylation site" description="N-linked (GlcNAc...) asparagine" evidence="2">
    <location>
        <position position="49"/>
    </location>
</feature>
<feature type="glycosylation site" description="N-linked (GlcNAc...) asparagine" evidence="2">
    <location>
        <position position="150"/>
    </location>
</feature>
<feature type="glycosylation site" description="N-linked (GlcNAc...) asparagine" evidence="2">
    <location>
        <position position="197"/>
    </location>
</feature>
<feature type="glycosylation site" description="N-linked (GlcNAc...) asparagine" evidence="2">
    <location>
        <position position="366"/>
    </location>
</feature>
<feature type="glycosylation site" description="N-linked (GlcNAc...) asparagine" evidence="2">
    <location>
        <position position="397"/>
    </location>
</feature>
<feature type="disulfide bond" evidence="1">
    <location>
        <begin position="278"/>
        <end position="290"/>
    </location>
</feature>
<feature type="disulfide bond" evidence="1">
    <location>
        <begin position="284"/>
        <end position="298"/>
    </location>
</feature>
<feature type="disulfide bond" evidence="1">
    <location>
        <begin position="359"/>
        <end position="381"/>
    </location>
</feature>
<feature type="disulfide bond" evidence="1">
    <location>
        <begin position="363"/>
        <end position="369"/>
    </location>
</feature>
<feature type="mutagenesis site" description="Impaired serine/threonine-protein kinase activity." evidence="10">
    <original>K</original>
    <variation>E</variation>
    <location>
        <position position="490"/>
    </location>
</feature>
<evidence type="ECO:0000250" key="1"/>
<evidence type="ECO:0000255" key="2"/>
<evidence type="ECO:0000255" key="3">
    <source>
        <dbReference type="PROSITE-ProRule" id="PRU00038"/>
    </source>
</evidence>
<evidence type="ECO:0000255" key="4">
    <source>
        <dbReference type="PROSITE-ProRule" id="PRU00159"/>
    </source>
</evidence>
<evidence type="ECO:0000255" key="5">
    <source>
        <dbReference type="PROSITE-ProRule" id="PRU00315"/>
    </source>
</evidence>
<evidence type="ECO:0000255" key="6">
    <source>
        <dbReference type="PROSITE-ProRule" id="PRU10027"/>
    </source>
</evidence>
<evidence type="ECO:0000256" key="7">
    <source>
        <dbReference type="SAM" id="MobiDB-lite"/>
    </source>
</evidence>
<evidence type="ECO:0000269" key="8">
    <source>
    </source>
</evidence>
<evidence type="ECO:0000269" key="9">
    <source>
    </source>
</evidence>
<evidence type="ECO:0000269" key="10">
    <source ref="4"/>
</evidence>
<evidence type="ECO:0000305" key="11"/>
<keyword id="KW-0067">ATP-binding</keyword>
<keyword id="KW-1003">Cell membrane</keyword>
<keyword id="KW-1015">Disulfide bond</keyword>
<keyword id="KW-0245">EGF-like domain</keyword>
<keyword id="KW-0325">Glycoprotein</keyword>
<keyword id="KW-0418">Kinase</keyword>
<keyword id="KW-0430">Lectin</keyword>
<keyword id="KW-0472">Membrane</keyword>
<keyword id="KW-0547">Nucleotide-binding</keyword>
<keyword id="KW-0597">Phosphoprotein</keyword>
<keyword id="KW-0675">Receptor</keyword>
<keyword id="KW-1185">Reference proteome</keyword>
<keyword id="KW-0723">Serine/threonine-protein kinase</keyword>
<keyword id="KW-0732">Signal</keyword>
<keyword id="KW-0808">Transferase</keyword>
<keyword id="KW-0812">Transmembrane</keyword>
<keyword id="KW-1133">Transmembrane helix</keyword>